<feature type="chain" id="PRO_0000181391" description="Probable nicotinate-nucleotide adenylyltransferase">
    <location>
        <begin position="1"/>
        <end position="197"/>
    </location>
</feature>
<reference key="1">
    <citation type="journal article" date="2003" name="Nat. Genet.">
        <title>Comparative analysis of the genome sequences of Bordetella pertussis, Bordetella parapertussis and Bordetella bronchiseptica.</title>
        <authorList>
            <person name="Parkhill J."/>
            <person name="Sebaihia M."/>
            <person name="Preston A."/>
            <person name="Murphy L.D."/>
            <person name="Thomson N.R."/>
            <person name="Harris D.E."/>
            <person name="Holden M.T.G."/>
            <person name="Churcher C.M."/>
            <person name="Bentley S.D."/>
            <person name="Mungall K.L."/>
            <person name="Cerdeno-Tarraga A.-M."/>
            <person name="Temple L."/>
            <person name="James K.D."/>
            <person name="Harris B."/>
            <person name="Quail M.A."/>
            <person name="Achtman M."/>
            <person name="Atkin R."/>
            <person name="Baker S."/>
            <person name="Basham D."/>
            <person name="Bason N."/>
            <person name="Cherevach I."/>
            <person name="Chillingworth T."/>
            <person name="Collins M."/>
            <person name="Cronin A."/>
            <person name="Davis P."/>
            <person name="Doggett J."/>
            <person name="Feltwell T."/>
            <person name="Goble A."/>
            <person name="Hamlin N."/>
            <person name="Hauser H."/>
            <person name="Holroyd S."/>
            <person name="Jagels K."/>
            <person name="Leather S."/>
            <person name="Moule S."/>
            <person name="Norberczak H."/>
            <person name="O'Neil S."/>
            <person name="Ormond D."/>
            <person name="Price C."/>
            <person name="Rabbinowitsch E."/>
            <person name="Rutter S."/>
            <person name="Sanders M."/>
            <person name="Saunders D."/>
            <person name="Seeger K."/>
            <person name="Sharp S."/>
            <person name="Simmonds M."/>
            <person name="Skelton J."/>
            <person name="Squares R."/>
            <person name="Squares S."/>
            <person name="Stevens K."/>
            <person name="Unwin L."/>
            <person name="Whitehead S."/>
            <person name="Barrell B.G."/>
            <person name="Maskell D.J."/>
        </authorList>
    </citation>
    <scope>NUCLEOTIDE SEQUENCE [LARGE SCALE GENOMIC DNA]</scope>
    <source>
        <strain>12822 / ATCC BAA-587 / NCTC 13253</strain>
    </source>
</reference>
<gene>
    <name evidence="1" type="primary">nadD</name>
    <name type="ordered locus">BPP2419</name>
</gene>
<organism>
    <name type="scientific">Bordetella parapertussis (strain 12822 / ATCC BAA-587 / NCTC 13253)</name>
    <dbReference type="NCBI Taxonomy" id="257311"/>
    <lineage>
        <taxon>Bacteria</taxon>
        <taxon>Pseudomonadati</taxon>
        <taxon>Pseudomonadota</taxon>
        <taxon>Betaproteobacteria</taxon>
        <taxon>Burkholderiales</taxon>
        <taxon>Alcaligenaceae</taxon>
        <taxon>Bordetella</taxon>
    </lineage>
</organism>
<proteinExistence type="inferred from homology"/>
<accession>Q7W7U1</accession>
<keyword id="KW-0067">ATP-binding</keyword>
<keyword id="KW-0520">NAD</keyword>
<keyword id="KW-0547">Nucleotide-binding</keyword>
<keyword id="KW-0548">Nucleotidyltransferase</keyword>
<keyword id="KW-0662">Pyridine nucleotide biosynthesis</keyword>
<keyword id="KW-0808">Transferase</keyword>
<dbReference type="EC" id="2.7.7.18" evidence="1"/>
<dbReference type="EMBL" id="BX640430">
    <property type="protein sequence ID" value="CAE37715.1"/>
    <property type="molecule type" value="Genomic_DNA"/>
</dbReference>
<dbReference type="RefSeq" id="WP_010928535.1">
    <property type="nucleotide sequence ID" value="NC_002928.3"/>
</dbReference>
<dbReference type="SMR" id="Q7W7U1"/>
<dbReference type="GeneID" id="93204204"/>
<dbReference type="KEGG" id="bpa:BPP2419"/>
<dbReference type="HOGENOM" id="CLU_069765_0_0_4"/>
<dbReference type="UniPathway" id="UPA00253">
    <property type="reaction ID" value="UER00332"/>
</dbReference>
<dbReference type="Proteomes" id="UP000001421">
    <property type="component" value="Chromosome"/>
</dbReference>
<dbReference type="GO" id="GO:0005524">
    <property type="term" value="F:ATP binding"/>
    <property type="evidence" value="ECO:0007669"/>
    <property type="project" value="UniProtKB-KW"/>
</dbReference>
<dbReference type="GO" id="GO:0004515">
    <property type="term" value="F:nicotinate-nucleotide adenylyltransferase activity"/>
    <property type="evidence" value="ECO:0007669"/>
    <property type="project" value="UniProtKB-UniRule"/>
</dbReference>
<dbReference type="GO" id="GO:0009435">
    <property type="term" value="P:NAD biosynthetic process"/>
    <property type="evidence" value="ECO:0007669"/>
    <property type="project" value="UniProtKB-UniRule"/>
</dbReference>
<dbReference type="CDD" id="cd02165">
    <property type="entry name" value="NMNAT"/>
    <property type="match status" value="1"/>
</dbReference>
<dbReference type="Gene3D" id="3.40.50.620">
    <property type="entry name" value="HUPs"/>
    <property type="match status" value="1"/>
</dbReference>
<dbReference type="HAMAP" id="MF_00244">
    <property type="entry name" value="NaMN_adenylyltr"/>
    <property type="match status" value="1"/>
</dbReference>
<dbReference type="InterPro" id="IPR004821">
    <property type="entry name" value="Cyt_trans-like"/>
</dbReference>
<dbReference type="InterPro" id="IPR005248">
    <property type="entry name" value="NadD/NMNAT"/>
</dbReference>
<dbReference type="InterPro" id="IPR014729">
    <property type="entry name" value="Rossmann-like_a/b/a_fold"/>
</dbReference>
<dbReference type="NCBIfam" id="TIGR00125">
    <property type="entry name" value="cyt_tran_rel"/>
    <property type="match status" value="1"/>
</dbReference>
<dbReference type="NCBIfam" id="TIGR00482">
    <property type="entry name" value="nicotinate (nicotinamide) nucleotide adenylyltransferase"/>
    <property type="match status" value="1"/>
</dbReference>
<dbReference type="PANTHER" id="PTHR39321">
    <property type="entry name" value="NICOTINATE-NUCLEOTIDE ADENYLYLTRANSFERASE-RELATED"/>
    <property type="match status" value="1"/>
</dbReference>
<dbReference type="PANTHER" id="PTHR39321:SF3">
    <property type="entry name" value="PHOSPHOPANTETHEINE ADENYLYLTRANSFERASE"/>
    <property type="match status" value="1"/>
</dbReference>
<dbReference type="Pfam" id="PF01467">
    <property type="entry name" value="CTP_transf_like"/>
    <property type="match status" value="1"/>
</dbReference>
<dbReference type="SUPFAM" id="SSF52374">
    <property type="entry name" value="Nucleotidylyl transferase"/>
    <property type="match status" value="1"/>
</dbReference>
<evidence type="ECO:0000255" key="1">
    <source>
        <dbReference type="HAMAP-Rule" id="MF_00244"/>
    </source>
</evidence>
<sequence length="197" mass="21393">MGVTRIGLLGGSFDPVHVAHIALADTARQFLGLDQVQLIPAANPWQRQPLKASAPHRLRMLELAIAGHPALAINPVEIERGGATYTADTVRALPGGPQYFWLLGTDQLQNFCTWRDWQDIAARIELAVATRPGASIAPPAELATWLAAHRRQLHELPFAPMAVSASDIRQRLAADAATDGLLPEPVAAYIATHHLYR</sequence>
<comment type="function">
    <text evidence="1">Catalyzes the reversible adenylation of nicotinate mononucleotide (NaMN) to nicotinic acid adenine dinucleotide (NaAD).</text>
</comment>
<comment type="catalytic activity">
    <reaction evidence="1">
        <text>nicotinate beta-D-ribonucleotide + ATP + H(+) = deamido-NAD(+) + diphosphate</text>
        <dbReference type="Rhea" id="RHEA:22860"/>
        <dbReference type="ChEBI" id="CHEBI:15378"/>
        <dbReference type="ChEBI" id="CHEBI:30616"/>
        <dbReference type="ChEBI" id="CHEBI:33019"/>
        <dbReference type="ChEBI" id="CHEBI:57502"/>
        <dbReference type="ChEBI" id="CHEBI:58437"/>
        <dbReference type="EC" id="2.7.7.18"/>
    </reaction>
</comment>
<comment type="pathway">
    <text evidence="1">Cofactor biosynthesis; NAD(+) biosynthesis; deamido-NAD(+) from nicotinate D-ribonucleotide: step 1/1.</text>
</comment>
<comment type="similarity">
    <text evidence="1">Belongs to the NadD family.</text>
</comment>
<protein>
    <recommendedName>
        <fullName evidence="1">Probable nicotinate-nucleotide adenylyltransferase</fullName>
        <ecNumber evidence="1">2.7.7.18</ecNumber>
    </recommendedName>
    <alternativeName>
        <fullName evidence="1">Deamido-NAD(+) diphosphorylase</fullName>
    </alternativeName>
    <alternativeName>
        <fullName evidence="1">Deamido-NAD(+) pyrophosphorylase</fullName>
    </alternativeName>
    <alternativeName>
        <fullName evidence="1">Nicotinate mononucleotide adenylyltransferase</fullName>
        <shortName evidence="1">NaMN adenylyltransferase</shortName>
    </alternativeName>
</protein>
<name>NADD_BORPA</name>